<feature type="chain" id="PRO_0000424261" description="AP-1 complex subunit mu-1">
    <location>
        <begin position="1"/>
        <end position="428"/>
    </location>
</feature>
<feature type="domain" description="MHD" evidence="2">
    <location>
        <begin position="170"/>
        <end position="426"/>
    </location>
</feature>
<gene>
    <name type="primary">AP1M1</name>
    <name type="ordered locus">At1g10730</name>
    <name type="ORF">F20B24.16</name>
    <name type="ORF">T16B5.13</name>
</gene>
<dbReference type="EMBL" id="AC007354">
    <property type="protein sequence ID" value="AAD31340.1"/>
    <property type="molecule type" value="Genomic_DNA"/>
</dbReference>
<dbReference type="EMBL" id="AC009398">
    <property type="protein sequence ID" value="AAF17661.1"/>
    <property type="status" value="ALT_SEQ"/>
    <property type="molecule type" value="Genomic_DNA"/>
</dbReference>
<dbReference type="EMBL" id="CP002684">
    <property type="protein sequence ID" value="AEE28635.1"/>
    <property type="molecule type" value="Genomic_DNA"/>
</dbReference>
<dbReference type="PIR" id="G86240">
    <property type="entry name" value="G86240"/>
</dbReference>
<dbReference type="RefSeq" id="NP_172543.1">
    <property type="nucleotide sequence ID" value="NM_100949.2"/>
</dbReference>
<dbReference type="SMR" id="Q9SAC9"/>
<dbReference type="BioGRID" id="22856">
    <property type="interactions" value="16"/>
</dbReference>
<dbReference type="FunCoup" id="Q9SAC9">
    <property type="interactions" value="3420"/>
</dbReference>
<dbReference type="STRING" id="3702.Q9SAC9"/>
<dbReference type="PaxDb" id="3702-AT1G10730.1"/>
<dbReference type="ProteomicsDB" id="244473"/>
<dbReference type="EnsemblPlants" id="AT1G10730.1">
    <property type="protein sequence ID" value="AT1G10730.1"/>
    <property type="gene ID" value="AT1G10730"/>
</dbReference>
<dbReference type="GeneID" id="837616"/>
<dbReference type="Gramene" id="AT1G10730.1">
    <property type="protein sequence ID" value="AT1G10730.1"/>
    <property type="gene ID" value="AT1G10730"/>
</dbReference>
<dbReference type="KEGG" id="ath:AT1G10730"/>
<dbReference type="Araport" id="AT1G10730"/>
<dbReference type="TAIR" id="AT1G10730">
    <property type="gene designation" value="AP1M1"/>
</dbReference>
<dbReference type="eggNOG" id="KOG0937">
    <property type="taxonomic scope" value="Eukaryota"/>
</dbReference>
<dbReference type="HOGENOM" id="CLU_026996_0_0_1"/>
<dbReference type="InParanoid" id="Q9SAC9"/>
<dbReference type="OrthoDB" id="10259133at2759"/>
<dbReference type="PhylomeDB" id="Q9SAC9"/>
<dbReference type="PRO" id="PR:Q9SAC9"/>
<dbReference type="Proteomes" id="UP000006548">
    <property type="component" value="Chromosome 1"/>
</dbReference>
<dbReference type="ExpressionAtlas" id="Q9SAC9">
    <property type="expression patterns" value="baseline and differential"/>
</dbReference>
<dbReference type="GO" id="GO:0030131">
    <property type="term" value="C:clathrin adaptor complex"/>
    <property type="evidence" value="ECO:0007669"/>
    <property type="project" value="InterPro"/>
</dbReference>
<dbReference type="GO" id="GO:0030665">
    <property type="term" value="C:clathrin-coated vesicle membrane"/>
    <property type="evidence" value="ECO:0007669"/>
    <property type="project" value="UniProtKB-SubCell"/>
</dbReference>
<dbReference type="GO" id="GO:0005794">
    <property type="term" value="C:Golgi apparatus"/>
    <property type="evidence" value="ECO:0007669"/>
    <property type="project" value="UniProtKB-SubCell"/>
</dbReference>
<dbReference type="GO" id="GO:0006886">
    <property type="term" value="P:intracellular protein transport"/>
    <property type="evidence" value="ECO:0007669"/>
    <property type="project" value="InterPro"/>
</dbReference>
<dbReference type="GO" id="GO:0016192">
    <property type="term" value="P:vesicle-mediated transport"/>
    <property type="evidence" value="ECO:0007669"/>
    <property type="project" value="InterPro"/>
</dbReference>
<dbReference type="CDD" id="cd09250">
    <property type="entry name" value="AP-1_Mu1_Cterm"/>
    <property type="match status" value="1"/>
</dbReference>
<dbReference type="CDD" id="cd14835">
    <property type="entry name" value="AP1_Mu_N"/>
    <property type="match status" value="1"/>
</dbReference>
<dbReference type="FunFam" id="3.30.450.60:FF:000006">
    <property type="entry name" value="AP-1 complex subunit mu-1 isoform 1"/>
    <property type="match status" value="1"/>
</dbReference>
<dbReference type="Gene3D" id="3.30.450.60">
    <property type="match status" value="1"/>
</dbReference>
<dbReference type="Gene3D" id="2.60.40.1170">
    <property type="entry name" value="Mu homology domain, subdomain B"/>
    <property type="match status" value="2"/>
</dbReference>
<dbReference type="InterPro" id="IPR050431">
    <property type="entry name" value="Adaptor_comp_med_subunit"/>
</dbReference>
<dbReference type="InterPro" id="IPR036168">
    <property type="entry name" value="AP2_Mu_C_sf"/>
</dbReference>
<dbReference type="InterPro" id="IPR022775">
    <property type="entry name" value="AP_mu_sigma_su"/>
</dbReference>
<dbReference type="InterPro" id="IPR001392">
    <property type="entry name" value="Clathrin_mu"/>
</dbReference>
<dbReference type="InterPro" id="IPR018240">
    <property type="entry name" value="Clathrin_mu_CS"/>
</dbReference>
<dbReference type="InterPro" id="IPR011012">
    <property type="entry name" value="Longin-like_dom_sf"/>
</dbReference>
<dbReference type="InterPro" id="IPR028565">
    <property type="entry name" value="MHD"/>
</dbReference>
<dbReference type="PANTHER" id="PTHR10529">
    <property type="entry name" value="AP COMPLEX SUBUNIT MU"/>
    <property type="match status" value="1"/>
</dbReference>
<dbReference type="Pfam" id="PF00928">
    <property type="entry name" value="Adap_comp_sub"/>
    <property type="match status" value="1"/>
</dbReference>
<dbReference type="Pfam" id="PF01217">
    <property type="entry name" value="Clat_adaptor_s"/>
    <property type="match status" value="1"/>
</dbReference>
<dbReference type="PIRSF" id="PIRSF005992">
    <property type="entry name" value="Clathrin_mu"/>
    <property type="match status" value="1"/>
</dbReference>
<dbReference type="PRINTS" id="PR00314">
    <property type="entry name" value="CLATHRINADPT"/>
</dbReference>
<dbReference type="SUPFAM" id="SSF49447">
    <property type="entry name" value="Second domain of Mu2 adaptin subunit (ap50) of ap2 adaptor"/>
    <property type="match status" value="1"/>
</dbReference>
<dbReference type="SUPFAM" id="SSF64356">
    <property type="entry name" value="SNARE-like"/>
    <property type="match status" value="1"/>
</dbReference>
<dbReference type="PROSITE" id="PS00991">
    <property type="entry name" value="CLAT_ADAPTOR_M_2"/>
    <property type="match status" value="1"/>
</dbReference>
<dbReference type="PROSITE" id="PS51072">
    <property type="entry name" value="MHD"/>
    <property type="match status" value="1"/>
</dbReference>
<name>AP1M1_ARATH</name>
<evidence type="ECO:0000250" key="1"/>
<evidence type="ECO:0000255" key="2">
    <source>
        <dbReference type="PROSITE-ProRule" id="PRU00404"/>
    </source>
</evidence>
<evidence type="ECO:0000269" key="3">
    <source>
    </source>
</evidence>
<evidence type="ECO:0000305" key="4"/>
<accession>Q9SAC9</accession>
<accession>Q9SGX7</accession>
<organism>
    <name type="scientific">Arabidopsis thaliana</name>
    <name type="common">Mouse-ear cress</name>
    <dbReference type="NCBI Taxonomy" id="3702"/>
    <lineage>
        <taxon>Eukaryota</taxon>
        <taxon>Viridiplantae</taxon>
        <taxon>Streptophyta</taxon>
        <taxon>Embryophyta</taxon>
        <taxon>Tracheophyta</taxon>
        <taxon>Spermatophyta</taxon>
        <taxon>Magnoliopsida</taxon>
        <taxon>eudicotyledons</taxon>
        <taxon>Gunneridae</taxon>
        <taxon>Pentapetalae</taxon>
        <taxon>rosids</taxon>
        <taxon>malvids</taxon>
        <taxon>Brassicales</taxon>
        <taxon>Brassicaceae</taxon>
        <taxon>Camelineae</taxon>
        <taxon>Arabidopsis</taxon>
    </lineage>
</organism>
<sequence>MAGAASALFLLDIKGRVLVWRDYRGDVTAAQAERFFTKLIETEGDSQSNDPVAYDNGVTYMFVQHSNIYLMIASRQNCNAASLLFFLHRVVDVFKHYFEELEEESLRDNFVVVYELLDEMMDFGYPQFTEARILSEFIKTDAYRMEVTQRPPMAVTNSVSWRSEGLKFKKNEVFLDVIESVNILVNSNGQIVRSDVVGALKMRTYLSGMPECKLGLNDRILLEAQGRAIKGKAIDLEDIKFHQCVRLARFENDRTISFIPPDGSFDLMTYRLSTQVKPLIWVEAHIERHSRSRVEMLVKARSQFKDRSYATSVEIELPVPTDAYNPDVRTSLGSAAYAPEKDALVWKIQYFYGNKEHTLKADFHLPSIAAEEATPERKAPIRVKFEIPKFIVSGIQVRYLKIIEKSGYQAHPWVRYITMAGEYELRLM</sequence>
<reference key="1">
    <citation type="journal article" date="2000" name="Nature">
        <title>Sequence and analysis of chromosome 1 of the plant Arabidopsis thaliana.</title>
        <authorList>
            <person name="Theologis A."/>
            <person name="Ecker J.R."/>
            <person name="Palm C.J."/>
            <person name="Federspiel N.A."/>
            <person name="Kaul S."/>
            <person name="White O."/>
            <person name="Alonso J."/>
            <person name="Altafi H."/>
            <person name="Araujo R."/>
            <person name="Bowman C.L."/>
            <person name="Brooks S.Y."/>
            <person name="Buehler E."/>
            <person name="Chan A."/>
            <person name="Chao Q."/>
            <person name="Chen H."/>
            <person name="Cheuk R.F."/>
            <person name="Chin C.W."/>
            <person name="Chung M.K."/>
            <person name="Conn L."/>
            <person name="Conway A.B."/>
            <person name="Conway A.R."/>
            <person name="Creasy T.H."/>
            <person name="Dewar K."/>
            <person name="Dunn P."/>
            <person name="Etgu P."/>
            <person name="Feldblyum T.V."/>
            <person name="Feng J.-D."/>
            <person name="Fong B."/>
            <person name="Fujii C.Y."/>
            <person name="Gill J.E."/>
            <person name="Goldsmith A.D."/>
            <person name="Haas B."/>
            <person name="Hansen N.F."/>
            <person name="Hughes B."/>
            <person name="Huizar L."/>
            <person name="Hunter J.L."/>
            <person name="Jenkins J."/>
            <person name="Johnson-Hopson C."/>
            <person name="Khan S."/>
            <person name="Khaykin E."/>
            <person name="Kim C.J."/>
            <person name="Koo H.L."/>
            <person name="Kremenetskaia I."/>
            <person name="Kurtz D.B."/>
            <person name="Kwan A."/>
            <person name="Lam B."/>
            <person name="Langin-Hooper S."/>
            <person name="Lee A."/>
            <person name="Lee J.M."/>
            <person name="Lenz C.A."/>
            <person name="Li J.H."/>
            <person name="Li Y.-P."/>
            <person name="Lin X."/>
            <person name="Liu S.X."/>
            <person name="Liu Z.A."/>
            <person name="Luros J.S."/>
            <person name="Maiti R."/>
            <person name="Marziali A."/>
            <person name="Militscher J."/>
            <person name="Miranda M."/>
            <person name="Nguyen M."/>
            <person name="Nierman W.C."/>
            <person name="Osborne B.I."/>
            <person name="Pai G."/>
            <person name="Peterson J."/>
            <person name="Pham P.K."/>
            <person name="Rizzo M."/>
            <person name="Rooney T."/>
            <person name="Rowley D."/>
            <person name="Sakano H."/>
            <person name="Salzberg S.L."/>
            <person name="Schwartz J.R."/>
            <person name="Shinn P."/>
            <person name="Southwick A.M."/>
            <person name="Sun H."/>
            <person name="Tallon L.J."/>
            <person name="Tambunga G."/>
            <person name="Toriumi M.J."/>
            <person name="Town C.D."/>
            <person name="Utterback T."/>
            <person name="Van Aken S."/>
            <person name="Vaysberg M."/>
            <person name="Vysotskaia V.S."/>
            <person name="Walker M."/>
            <person name="Wu D."/>
            <person name="Yu G."/>
            <person name="Fraser C.M."/>
            <person name="Venter J.C."/>
            <person name="Davis R.W."/>
        </authorList>
    </citation>
    <scope>NUCLEOTIDE SEQUENCE [LARGE SCALE GENOMIC DNA]</scope>
    <source>
        <strain>cv. Columbia</strain>
    </source>
</reference>
<reference key="2">
    <citation type="journal article" date="2017" name="Plant J.">
        <title>Araport11: a complete reannotation of the Arabidopsis thaliana reference genome.</title>
        <authorList>
            <person name="Cheng C.Y."/>
            <person name="Krishnakumar V."/>
            <person name="Chan A.P."/>
            <person name="Thibaud-Nissen F."/>
            <person name="Schobel S."/>
            <person name="Town C.D."/>
        </authorList>
    </citation>
    <scope>GENOME REANNOTATION</scope>
    <source>
        <strain>cv. Columbia</strain>
    </source>
</reference>
<reference key="3">
    <citation type="journal article" date="2001" name="Mol. Biol. Cell">
        <title>Adaptins: the final recount.</title>
        <authorList>
            <person name="Boehm M."/>
            <person name="Bonifacino J.S."/>
        </authorList>
    </citation>
    <scope>GENE FAMILY</scope>
    <scope>REVIEW</scope>
</reference>
<reference key="4">
    <citation type="journal article" date="2004" name="Plant J.">
        <title>Arabidopsis muA-adaptin interacts with the tyrosine motif of the vacuolar sorting receptor VSR-PS1.</title>
        <authorList>
            <person name="Happel N."/>
            <person name="Hoening S."/>
            <person name="Neuhaus J.M."/>
            <person name="Paris N."/>
            <person name="Robinson D.G."/>
            <person name="Holstein S.E."/>
        </authorList>
    </citation>
    <scope>GENE FAMILY</scope>
</reference>
<reference key="5">
    <citation type="journal article" date="2013" name="Proc. Natl. Acad. Sci. U.S.A.">
        <title>Arabidopsis mu-adaptin subunit AP1M of adaptor protein complex 1 mediates late secretory and vacuolar traffic and is required for growth.</title>
        <authorList>
            <person name="Park M."/>
            <person name="Song K."/>
            <person name="Reichardt I."/>
            <person name="Kim H."/>
            <person name="Mayer U."/>
            <person name="Stierhof Y.D."/>
            <person name="Hwang I."/>
            <person name="Juergens G."/>
        </authorList>
    </citation>
    <scope>DISRUPTION PHENOTYPE</scope>
    <scope>FUNCTION</scope>
    <scope>COMPONENT OF THE AP-1 COMPLEX</scope>
</reference>
<protein>
    <recommendedName>
        <fullName>AP-1 complex subunit mu-1</fullName>
    </recommendedName>
    <alternativeName>
        <fullName>Adaptor protein complex AP-1 subunit mu-1</fullName>
    </alternativeName>
    <alternativeName>
        <fullName>Adaptor protein-1 mu-adaptin 1</fullName>
    </alternativeName>
    <alternativeName>
        <fullName>Adaptor-related protein complex 1 subunit mu-1</fullName>
    </alternativeName>
    <alternativeName>
        <fullName>At-muB1-Ad</fullName>
    </alternativeName>
    <alternativeName>
        <fullName>Clathrin assembly protein complex 1 mu-1 medium chain</fullName>
    </alternativeName>
    <alternativeName>
        <fullName>Mu1-adaptin 1</fullName>
    </alternativeName>
</protein>
<keyword id="KW-0968">Cytoplasmic vesicle</keyword>
<keyword id="KW-0333">Golgi apparatus</keyword>
<keyword id="KW-0472">Membrane</keyword>
<keyword id="KW-0653">Protein transport</keyword>
<keyword id="KW-1185">Reference proteome</keyword>
<keyword id="KW-0813">Transport</keyword>
<proteinExistence type="inferred from homology"/>
<comment type="function">
    <text evidence="3">Subunit of clathrin-associated adaptor protein complex 1 that plays a role in protein sorting at the trans-Golgi network and early endosomes (TGN/EE). The AP complexes mediate the recruitment of clathrin to membranes and the recognition of sorting signals within the cytosolic tails of transmembrane cargo molecules. Functions redundantly with AP1M2 in multiple post-Golgi trafficking pathways leading from the TGN to the vacuole, the plasma membrane, and the cell-division plane.</text>
</comment>
<comment type="subunit">
    <text>Adaptor protein complex 1 (AP-1) is a heterotetramer composed of two large adaptins (gamma-type subunit and beta-type subunit), a medium adaptin (mu-type subunit) and a small adaptin (sigma-type subunit).</text>
</comment>
<comment type="subcellular location">
    <subcellularLocation>
        <location evidence="1">Golgi apparatus</location>
    </subcellularLocation>
    <subcellularLocation>
        <location evidence="1">Cytoplasmic vesicle</location>
        <location evidence="1">Clathrin-coated vesicle membrane</location>
        <topology evidence="1">Peripheral membrane protein</topology>
        <orientation evidence="1">Cytoplasmic side</orientation>
    </subcellularLocation>
</comment>
<comment type="disruption phenotype">
    <text evidence="3">Growth retardation phenotype.</text>
</comment>
<comment type="similarity">
    <text evidence="4">Belongs to the adaptor complexes medium subunit family.</text>
</comment>
<comment type="sequence caution" evidence="4">
    <conflict type="erroneous gene model prediction">
        <sequence resource="EMBL-CDS" id="AAF17661"/>
    </conflict>
</comment>